<dbReference type="EC" id="3.2.2.-" evidence="1"/>
<dbReference type="EMBL" id="CP000458">
    <property type="protein sequence ID" value="ABK09525.1"/>
    <property type="molecule type" value="Genomic_DNA"/>
</dbReference>
<dbReference type="RefSeq" id="WP_011546226.1">
    <property type="nucleotide sequence ID" value="NC_008542.1"/>
</dbReference>
<dbReference type="SMR" id="A0KAJ8"/>
<dbReference type="KEGG" id="bch:Bcen2424_2775"/>
<dbReference type="HOGENOM" id="CLU_060471_3_0_4"/>
<dbReference type="GO" id="GO:0003905">
    <property type="term" value="F:alkylbase DNA N-glycosylase activity"/>
    <property type="evidence" value="ECO:0007669"/>
    <property type="project" value="InterPro"/>
</dbReference>
<dbReference type="GO" id="GO:0003677">
    <property type="term" value="F:DNA binding"/>
    <property type="evidence" value="ECO:0007669"/>
    <property type="project" value="InterPro"/>
</dbReference>
<dbReference type="GO" id="GO:0006284">
    <property type="term" value="P:base-excision repair"/>
    <property type="evidence" value="ECO:0007669"/>
    <property type="project" value="InterPro"/>
</dbReference>
<dbReference type="CDD" id="cd00540">
    <property type="entry name" value="AAG"/>
    <property type="match status" value="1"/>
</dbReference>
<dbReference type="FunFam" id="3.10.300.10:FF:000001">
    <property type="entry name" value="Putative 3-methyladenine DNA glycosylase"/>
    <property type="match status" value="1"/>
</dbReference>
<dbReference type="Gene3D" id="3.10.300.10">
    <property type="entry name" value="Methylpurine-DNA glycosylase (MPG)"/>
    <property type="match status" value="1"/>
</dbReference>
<dbReference type="HAMAP" id="MF_00527">
    <property type="entry name" value="3MGH"/>
    <property type="match status" value="1"/>
</dbReference>
<dbReference type="InterPro" id="IPR011034">
    <property type="entry name" value="Formyl_transferase-like_C_sf"/>
</dbReference>
<dbReference type="InterPro" id="IPR003180">
    <property type="entry name" value="MPG"/>
</dbReference>
<dbReference type="InterPro" id="IPR036995">
    <property type="entry name" value="MPG_sf"/>
</dbReference>
<dbReference type="NCBIfam" id="TIGR00567">
    <property type="entry name" value="3mg"/>
    <property type="match status" value="1"/>
</dbReference>
<dbReference type="NCBIfam" id="NF002003">
    <property type="entry name" value="PRK00802.1-3"/>
    <property type="match status" value="1"/>
</dbReference>
<dbReference type="PANTHER" id="PTHR10429">
    <property type="entry name" value="DNA-3-METHYLADENINE GLYCOSYLASE"/>
    <property type="match status" value="1"/>
</dbReference>
<dbReference type="PANTHER" id="PTHR10429:SF0">
    <property type="entry name" value="DNA-3-METHYLADENINE GLYCOSYLASE"/>
    <property type="match status" value="1"/>
</dbReference>
<dbReference type="Pfam" id="PF02245">
    <property type="entry name" value="Pur_DNA_glyco"/>
    <property type="match status" value="1"/>
</dbReference>
<dbReference type="SUPFAM" id="SSF50486">
    <property type="entry name" value="FMT C-terminal domain-like"/>
    <property type="match status" value="1"/>
</dbReference>
<comment type="similarity">
    <text evidence="1">Belongs to the DNA glycosylase MPG family.</text>
</comment>
<feature type="chain" id="PRO_1000050983" description="Putative 3-methyladenine DNA glycosylase">
    <location>
        <begin position="1"/>
        <end position="207"/>
    </location>
</feature>
<protein>
    <recommendedName>
        <fullName evidence="1">Putative 3-methyladenine DNA glycosylase</fullName>
        <ecNumber evidence="1">3.2.2.-</ecNumber>
    </recommendedName>
</protein>
<accession>A0KAJ8</accession>
<gene>
    <name type="ordered locus">Bcen2424_2775</name>
</gene>
<sequence>MRRSKTAAPWPGTIVPRAFFNRMATEVAPQLLNKILAAADGRAGRIVEVEAYAGALDPAAHTYRGKTPRNATMFGPPGHFYVYFTYGMHWCCNCVCGPDGAGTGVLIRALEPLHGLEQMRAARPPRTRDRDLCRGPARLTQAMGIGGAQDGVDLVGARDGFAIVDDGMAPPADLAGGPRIGIRVGQDLPWRWSVPGNRYVSGAVPRI</sequence>
<name>3MGH_BURCH</name>
<keyword id="KW-0227">DNA damage</keyword>
<keyword id="KW-0234">DNA repair</keyword>
<keyword id="KW-0378">Hydrolase</keyword>
<reference key="1">
    <citation type="submission" date="2006-08" db="EMBL/GenBank/DDBJ databases">
        <title>Complete sequence of chromosome 1 of Burkholderia cenocepacia HI2424.</title>
        <authorList>
            <person name="Copeland A."/>
            <person name="Lucas S."/>
            <person name="Lapidus A."/>
            <person name="Barry K."/>
            <person name="Detter J.C."/>
            <person name="Glavina del Rio T."/>
            <person name="Hammon N."/>
            <person name="Israni S."/>
            <person name="Pitluck S."/>
            <person name="Chain P."/>
            <person name="Malfatti S."/>
            <person name="Shin M."/>
            <person name="Vergez L."/>
            <person name="Schmutz J."/>
            <person name="Larimer F."/>
            <person name="Land M."/>
            <person name="Hauser L."/>
            <person name="Kyrpides N."/>
            <person name="Kim E."/>
            <person name="LiPuma J.J."/>
            <person name="Gonzalez C.F."/>
            <person name="Konstantinidis K."/>
            <person name="Tiedje J.M."/>
            <person name="Richardson P."/>
        </authorList>
    </citation>
    <scope>NUCLEOTIDE SEQUENCE [LARGE SCALE GENOMIC DNA]</scope>
    <source>
        <strain>HI2424</strain>
    </source>
</reference>
<evidence type="ECO:0000255" key="1">
    <source>
        <dbReference type="HAMAP-Rule" id="MF_00527"/>
    </source>
</evidence>
<proteinExistence type="inferred from homology"/>
<organism>
    <name type="scientific">Burkholderia cenocepacia (strain HI2424)</name>
    <dbReference type="NCBI Taxonomy" id="331272"/>
    <lineage>
        <taxon>Bacteria</taxon>
        <taxon>Pseudomonadati</taxon>
        <taxon>Pseudomonadota</taxon>
        <taxon>Betaproteobacteria</taxon>
        <taxon>Burkholderiales</taxon>
        <taxon>Burkholderiaceae</taxon>
        <taxon>Burkholderia</taxon>
        <taxon>Burkholderia cepacia complex</taxon>
    </lineage>
</organism>